<reference evidence="5" key="1">
    <citation type="journal article" date="2007" name="Nature">
        <title>Evolution of genes and genomes on the Drosophila phylogeny.</title>
        <authorList>
            <consortium name="Drosophila 12 genomes consortium"/>
        </authorList>
    </citation>
    <scope>NUCLEOTIDE SEQUENCE [LARGE SCALE GENOMIC DNA]</scope>
    <source>
        <strain>MSH-3 / Tucson 14011-0111.49</strain>
    </source>
</reference>
<feature type="chain" id="PRO_0000386612" description="Dolichyl-diphosphooligosaccharide--protein glycosyltransferase subunit 4">
    <location>
        <begin position="1"/>
        <end position="40"/>
    </location>
</feature>
<feature type="topological domain" description="Lumenal" evidence="4">
    <location>
        <begin position="1"/>
        <end position="4"/>
    </location>
</feature>
<feature type="transmembrane region" description="Helical" evidence="4">
    <location>
        <begin position="5"/>
        <end position="25"/>
    </location>
</feature>
<feature type="topological domain" description="Cytoplasmic" evidence="4">
    <location>
        <begin position="26"/>
        <end position="40"/>
    </location>
</feature>
<keyword id="KW-0256">Endoplasmic reticulum</keyword>
<keyword id="KW-0472">Membrane</keyword>
<keyword id="KW-1185">Reference proteome</keyword>
<keyword id="KW-0735">Signal-anchor</keyword>
<keyword id="KW-0812">Transmembrane</keyword>
<keyword id="KW-1133">Transmembrane helix</keyword>
<comment type="function">
    <text evidence="2">Subunit of the oligosaccharyl transferase (OST) complex that catalyzes the initial transfer of a defined glycan (Glc(3)Man(9)GlcNAc(2) in eukaryotes) from the lipid carrier dolichol-pyrophosphate to an asparagine residue within an Asn-X-Ser/Thr consensus motif in nascent polypeptide chains, the first step in protein N-glycosylation. N-glycosylation occurs cotranslationally and the complex associates with the Sec61 complex at the channel-forming translocon complex that mediates protein translocation across the endoplasmic reticulum (ER). All subunits are required for a maximal enzyme activity.</text>
</comment>
<comment type="subunit">
    <text evidence="2">Component of the oligosaccharyltransferase (OST) complex.</text>
</comment>
<comment type="subcellular location">
    <subcellularLocation>
        <location evidence="1">Endoplasmic reticulum membrane</location>
        <topology evidence="1">Single-pass type III membrane protein</topology>
    </subcellularLocation>
</comment>
<comment type="similarity">
    <text evidence="4">Belongs to the OST4 family.</text>
</comment>
<gene>
    <name type="ORF">GL16887</name>
</gene>
<name>OST4_DROPE</name>
<dbReference type="EMBL" id="CH479183">
    <property type="protein sequence ID" value="EDW36048.1"/>
    <property type="molecule type" value="Genomic_DNA"/>
</dbReference>
<dbReference type="SMR" id="B4GHS8"/>
<dbReference type="STRING" id="7234.B4GHS8"/>
<dbReference type="EnsemblMetazoa" id="FBtr0182502">
    <property type="protein sequence ID" value="FBpp0180994"/>
    <property type="gene ID" value="FBgn0154491"/>
</dbReference>
<dbReference type="EnsemblMetazoa" id="XM_002018173.2">
    <property type="protein sequence ID" value="XP_002018209.1"/>
    <property type="gene ID" value="LOC6592890"/>
</dbReference>
<dbReference type="GeneID" id="6592890"/>
<dbReference type="KEGG" id="dpe:6592890"/>
<dbReference type="HOGENOM" id="CLU_186352_2_0_1"/>
<dbReference type="PhylomeDB" id="B4GHS8"/>
<dbReference type="Proteomes" id="UP000008744">
    <property type="component" value="Unassembled WGS sequence"/>
</dbReference>
<dbReference type="GO" id="GO:0008250">
    <property type="term" value="C:oligosaccharyltransferase complex"/>
    <property type="evidence" value="ECO:0000250"/>
    <property type="project" value="UniProtKB"/>
</dbReference>
<dbReference type="GO" id="GO:0006487">
    <property type="term" value="P:protein N-linked glycosylation"/>
    <property type="evidence" value="ECO:0000250"/>
    <property type="project" value="UniProtKB"/>
</dbReference>
<dbReference type="GO" id="GO:0018279">
    <property type="term" value="P:protein N-linked glycosylation via asparagine"/>
    <property type="evidence" value="ECO:0007669"/>
    <property type="project" value="TreeGrafter"/>
</dbReference>
<dbReference type="InterPro" id="IPR018943">
    <property type="entry name" value="Oligosaccaryltransferase"/>
</dbReference>
<dbReference type="InterPro" id="IPR051307">
    <property type="entry name" value="OST4"/>
</dbReference>
<dbReference type="InterPro" id="IPR036330">
    <property type="entry name" value="Ost4p_sf"/>
</dbReference>
<dbReference type="PANTHER" id="PTHR48164">
    <property type="entry name" value="DOLICHYL-DIPHOSPHOOLIGOSACCHARIDE--PROTEIN GLYCOSYLTRANSFERASE SUBUNIT 4"/>
    <property type="match status" value="1"/>
</dbReference>
<dbReference type="PANTHER" id="PTHR48164:SF1">
    <property type="entry name" value="DOLICHYL-DIPHOSPHOOLIGOSACCHARIDE--PROTEIN GLYCOSYLTRANSFERASE SUBUNIT 4"/>
    <property type="match status" value="1"/>
</dbReference>
<dbReference type="Pfam" id="PF10215">
    <property type="entry name" value="Ost4"/>
    <property type="match status" value="1"/>
</dbReference>
<dbReference type="SUPFAM" id="SSF103464">
    <property type="entry name" value="Oligosaccharyltransferase subunit ost4p"/>
    <property type="match status" value="1"/>
</dbReference>
<organism>
    <name type="scientific">Drosophila persimilis</name>
    <name type="common">Fruit fly</name>
    <dbReference type="NCBI Taxonomy" id="7234"/>
    <lineage>
        <taxon>Eukaryota</taxon>
        <taxon>Metazoa</taxon>
        <taxon>Ecdysozoa</taxon>
        <taxon>Arthropoda</taxon>
        <taxon>Hexapoda</taxon>
        <taxon>Insecta</taxon>
        <taxon>Pterygota</taxon>
        <taxon>Neoptera</taxon>
        <taxon>Endopterygota</taxon>
        <taxon>Diptera</taxon>
        <taxon>Brachycera</taxon>
        <taxon>Muscomorpha</taxon>
        <taxon>Ephydroidea</taxon>
        <taxon>Drosophilidae</taxon>
        <taxon>Drosophila</taxon>
        <taxon>Sophophora</taxon>
    </lineage>
</organism>
<protein>
    <recommendedName>
        <fullName evidence="3">Dolichyl-diphosphooligosaccharide--protein glycosyltransferase subunit 4</fullName>
    </recommendedName>
</protein>
<evidence type="ECO:0000250" key="1"/>
<evidence type="ECO:0000250" key="2">
    <source>
        <dbReference type="UniProtKB" id="P0C6T2"/>
    </source>
</evidence>
<evidence type="ECO:0000250" key="3">
    <source>
        <dbReference type="UniProtKB" id="Q99380"/>
    </source>
</evidence>
<evidence type="ECO:0000255" key="4"/>
<evidence type="ECO:0000312" key="5">
    <source>
        <dbReference type="EMBL" id="EDW36048.1"/>
    </source>
</evidence>
<sequence>MITDVQLAIFSNVLGVFLFLLVVAYHYINANTGKSSPKAK</sequence>
<accession>B4GHS8</accession>
<proteinExistence type="inferred from homology"/>